<reference key="1">
    <citation type="journal article" date="2002" name="J. Bacteriol.">
        <title>Whole-genome comparison of Mycobacterium tuberculosis clinical and laboratory strains.</title>
        <authorList>
            <person name="Fleischmann R.D."/>
            <person name="Alland D."/>
            <person name="Eisen J.A."/>
            <person name="Carpenter L."/>
            <person name="White O."/>
            <person name="Peterson J.D."/>
            <person name="DeBoy R.T."/>
            <person name="Dodson R.J."/>
            <person name="Gwinn M.L."/>
            <person name="Haft D.H."/>
            <person name="Hickey E.K."/>
            <person name="Kolonay J.F."/>
            <person name="Nelson W.C."/>
            <person name="Umayam L.A."/>
            <person name="Ermolaeva M.D."/>
            <person name="Salzberg S.L."/>
            <person name="Delcher A."/>
            <person name="Utterback T.R."/>
            <person name="Weidman J.F."/>
            <person name="Khouri H.M."/>
            <person name="Gill J."/>
            <person name="Mikula A."/>
            <person name="Bishai W."/>
            <person name="Jacobs W.R. Jr."/>
            <person name="Venter J.C."/>
            <person name="Fraser C.M."/>
        </authorList>
    </citation>
    <scope>NUCLEOTIDE SEQUENCE [LARGE SCALE GENOMIC DNA]</scope>
    <source>
        <strain>CDC 1551 / Oshkosh</strain>
    </source>
</reference>
<organism>
    <name type="scientific">Mycobacterium tuberculosis (strain CDC 1551 / Oshkosh)</name>
    <dbReference type="NCBI Taxonomy" id="83331"/>
    <lineage>
        <taxon>Bacteria</taxon>
        <taxon>Bacillati</taxon>
        <taxon>Actinomycetota</taxon>
        <taxon>Actinomycetes</taxon>
        <taxon>Mycobacteriales</taxon>
        <taxon>Mycobacteriaceae</taxon>
        <taxon>Mycobacterium</taxon>
        <taxon>Mycobacterium tuberculosis complex</taxon>
    </lineage>
</organism>
<name>Y1815_MYCTO</name>
<evidence type="ECO:0000255" key="1"/>
<sequence length="221" mass="22853">MVRLVPRAFAATVALLAAGFSPATASADPVLVFPGMEIRQDNHVCTLGYVDPALKIAFTAGHCRGGGAVTSRDYKVIGHLRAFRDNTPSGSTVATHELIADYEAIVLADDVTASNILPSGRALESRPGVVLHPGQAVCHFGVSTGETCGTVESVNNGWFTMSHGVLSEKGDSGGPVYLAPDGGPAQIVGIFNSVWGGFPAAVSWRSTSEQVHADLGVTPLA</sequence>
<protein>
    <recommendedName>
        <fullName>Uncharacterized protein MT1863</fullName>
    </recommendedName>
</protein>
<accession>P9WLR8</accession>
<accession>L0T9C2</accession>
<accession>Q50618</accession>
<dbReference type="EMBL" id="AE000516">
    <property type="protein sequence ID" value="AAK46136.1"/>
    <property type="molecule type" value="Genomic_DNA"/>
</dbReference>
<dbReference type="PIR" id="H70719">
    <property type="entry name" value="H70719"/>
</dbReference>
<dbReference type="RefSeq" id="WP_003409204.1">
    <property type="nucleotide sequence ID" value="NZ_KK341227.1"/>
</dbReference>
<dbReference type="SMR" id="P9WLR8"/>
<dbReference type="KEGG" id="mtc:MT1863"/>
<dbReference type="PATRIC" id="fig|83331.31.peg.2006"/>
<dbReference type="HOGENOM" id="CLU_084454_0_0_11"/>
<dbReference type="Proteomes" id="UP000001020">
    <property type="component" value="Chromosome"/>
</dbReference>
<dbReference type="Gene3D" id="2.40.10.10">
    <property type="entry name" value="Trypsin-like serine proteases"/>
    <property type="match status" value="2"/>
</dbReference>
<dbReference type="InterPro" id="IPR009003">
    <property type="entry name" value="Peptidase_S1_PA"/>
</dbReference>
<dbReference type="InterPro" id="IPR043504">
    <property type="entry name" value="Peptidase_S1_PA_chymotrypsin"/>
</dbReference>
<dbReference type="SUPFAM" id="SSF50494">
    <property type="entry name" value="Trypsin-like serine proteases"/>
    <property type="match status" value="1"/>
</dbReference>
<feature type="signal peptide" evidence="1">
    <location>
        <begin position="1"/>
        <end position="26"/>
    </location>
</feature>
<feature type="chain" id="PRO_0000427431" description="Uncharacterized protein MT1863">
    <location>
        <begin position="27"/>
        <end position="221"/>
    </location>
</feature>
<proteinExistence type="inferred from homology"/>
<keyword id="KW-1185">Reference proteome</keyword>
<keyword id="KW-0732">Signal</keyword>
<gene>
    <name type="ordered locus">MT1863</name>
</gene>